<accession>P61163</accession>
<accession>B2R6B0</accession>
<accession>P42024</accession>
<feature type="chain" id="PRO_0000089058" description="Alpha-centractin">
    <location>
        <begin position="1"/>
        <end position="376"/>
    </location>
</feature>
<feature type="modified residue" description="N-acetylmethionine" evidence="8 9">
    <location>
        <position position="1"/>
    </location>
</feature>
<keyword id="KW-0007">Acetylation</keyword>
<keyword id="KW-0067">ATP-binding</keyword>
<keyword id="KW-0963">Cytoplasm</keyword>
<keyword id="KW-0206">Cytoskeleton</keyword>
<keyword id="KW-0903">Direct protein sequencing</keyword>
<keyword id="KW-0547">Nucleotide-binding</keyword>
<keyword id="KW-1267">Proteomics identification</keyword>
<keyword id="KW-1185">Reference proteome</keyword>
<sequence length="376" mass="42614">MESYDVIANQPVVIDNGSGVIKAGFAGDQIPKYCFPNYVGRPKHVRVMAGALEGDIFIGPKAEEHRGLLSIRYPMEHGIVKDWNDMERIWQYVYSKDQLQTFSEEHPVLLTEAPLNPRKNRERAAEVFFETFNVPALFISMQAVLSLYATGRTTGVVLDSGDGVTHAVPIYEGFAMPHSIMRIDIAGRDVSRFLRLYLRKEGYDFHSSSEFEIVKAIKERACYLSINPQKDETLETEKAQYYLPDGSTIEIGPSRFRAPELLFRPDLIGEESEGIHEVLVFAIQKSDMDLRRTLFSNIVLSGGSTLFKGFGDRLLSEVKKLAPKDVKIRISAPQERLYSTWIGGSILASLDTFKKMWVSKKEYEEDGARSIHRKTF</sequence>
<name>ACTZ_HUMAN</name>
<comment type="function">
    <text evidence="1">Part of the ACTR1A/ACTB filament around which the dynactin complex is built. The dynactin multiprotein complex activates the molecular motor dynein for ultra-processive transport along microtubules.</text>
</comment>
<comment type="subunit">
    <text evidence="1 5">Part of the ACTR1A/ACTB filament around which the dynactin complex is built. The filament contains 8 copies of ACTR1A and 1 ACTB. Interacts with dynein and adapters such as BICD2 (By similarity). Interacts with BCCIP (isoform 2/alpha) (PubMed:28394342).</text>
</comment>
<comment type="subcellular location">
    <subcellularLocation>
        <location evidence="2">Cytoplasm</location>
        <location evidence="2">Cytoskeleton</location>
    </subcellularLocation>
    <subcellularLocation>
        <location evidence="3">Cytoplasm</location>
        <location evidence="3">Cytoskeleton</location>
        <location evidence="3">Microtubule organizing center</location>
        <location evidence="3">Centrosome</location>
    </subcellularLocation>
    <subcellularLocation>
        <location evidence="4">Cytoplasm</location>
        <location evidence="4">Cell cortex</location>
    </subcellularLocation>
</comment>
<comment type="similarity">
    <text evidence="6">Belongs to the actin family. ARP1 subfamily.</text>
</comment>
<gene>
    <name evidence="7" type="primary">ACTR1A</name>
    <name type="synonym">CTRN1</name>
</gene>
<dbReference type="EMBL" id="X82206">
    <property type="protein sequence ID" value="CAA57690.1"/>
    <property type="molecule type" value="mRNA"/>
</dbReference>
<dbReference type="EMBL" id="Z14978">
    <property type="protein sequence ID" value="CAA78701.1"/>
    <property type="molecule type" value="mRNA"/>
</dbReference>
<dbReference type="EMBL" id="AK312506">
    <property type="protein sequence ID" value="BAG35407.1"/>
    <property type="molecule type" value="mRNA"/>
</dbReference>
<dbReference type="EMBL" id="AL121928">
    <property type="status" value="NOT_ANNOTATED_CDS"/>
    <property type="molecule type" value="Genomic_DNA"/>
</dbReference>
<dbReference type="EMBL" id="CH471066">
    <property type="protein sequence ID" value="EAW49685.1"/>
    <property type="molecule type" value="Genomic_DNA"/>
</dbReference>
<dbReference type="EMBL" id="BC000693">
    <property type="protein sequence ID" value="AAH00693.1"/>
    <property type="molecule type" value="mRNA"/>
</dbReference>
<dbReference type="EMBL" id="BC026016">
    <property type="protein sequence ID" value="AAH26016.1"/>
    <property type="molecule type" value="mRNA"/>
</dbReference>
<dbReference type="CCDS" id="CCDS7536.1"/>
<dbReference type="PIR" id="S29089">
    <property type="entry name" value="S29089"/>
</dbReference>
<dbReference type="RefSeq" id="NP_005727.1">
    <property type="nucleotide sequence ID" value="NM_005736.4"/>
</dbReference>
<dbReference type="SMR" id="P61163"/>
<dbReference type="BioGRID" id="115425">
    <property type="interactions" value="286"/>
</dbReference>
<dbReference type="FunCoup" id="P61163">
    <property type="interactions" value="1755"/>
</dbReference>
<dbReference type="IntAct" id="P61163">
    <property type="interactions" value="105"/>
</dbReference>
<dbReference type="MINT" id="P61163"/>
<dbReference type="STRING" id="9606.ENSP00000358921"/>
<dbReference type="GlyGen" id="P61163">
    <property type="glycosylation" value="1 site, 1 O-linked glycan (1 site)"/>
</dbReference>
<dbReference type="iPTMnet" id="P61163"/>
<dbReference type="MetOSite" id="P61163"/>
<dbReference type="PhosphoSitePlus" id="P61163"/>
<dbReference type="SwissPalm" id="P61163"/>
<dbReference type="BioMuta" id="ACTR1A"/>
<dbReference type="DMDM" id="47117651"/>
<dbReference type="OGP" id="P42024"/>
<dbReference type="REPRODUCTION-2DPAGE" id="IPI00029468"/>
<dbReference type="jPOST" id="P61163"/>
<dbReference type="MassIVE" id="P61163"/>
<dbReference type="PaxDb" id="9606-ENSP00000358921"/>
<dbReference type="PeptideAtlas" id="P61163"/>
<dbReference type="ProteomicsDB" id="57270"/>
<dbReference type="Pumba" id="P61163"/>
<dbReference type="Antibodypedia" id="31450">
    <property type="antibodies" value="264 antibodies from 31 providers"/>
</dbReference>
<dbReference type="DNASU" id="10121"/>
<dbReference type="Ensembl" id="ENST00000369905.9">
    <property type="protein sequence ID" value="ENSP00000358921.4"/>
    <property type="gene ID" value="ENSG00000138107.13"/>
</dbReference>
<dbReference type="GeneID" id="10121"/>
<dbReference type="KEGG" id="hsa:10121"/>
<dbReference type="MANE-Select" id="ENST00000369905.9">
    <property type="protein sequence ID" value="ENSP00000358921.4"/>
    <property type="RefSeq nucleotide sequence ID" value="NM_005736.4"/>
    <property type="RefSeq protein sequence ID" value="NP_005727.1"/>
</dbReference>
<dbReference type="UCSC" id="uc001kvv.4">
    <property type="organism name" value="human"/>
</dbReference>
<dbReference type="AGR" id="HGNC:167"/>
<dbReference type="CTD" id="10121"/>
<dbReference type="DisGeNET" id="10121"/>
<dbReference type="GeneCards" id="ACTR1A"/>
<dbReference type="HGNC" id="HGNC:167">
    <property type="gene designation" value="ACTR1A"/>
</dbReference>
<dbReference type="HPA" id="ENSG00000138107">
    <property type="expression patterns" value="Low tissue specificity"/>
</dbReference>
<dbReference type="MalaCards" id="ACTR1A"/>
<dbReference type="MIM" id="605143">
    <property type="type" value="gene"/>
</dbReference>
<dbReference type="neXtProt" id="NX_P61163"/>
<dbReference type="OpenTargets" id="ENSG00000138107"/>
<dbReference type="PharmGKB" id="PA24486"/>
<dbReference type="VEuPathDB" id="HostDB:ENSG00000138107"/>
<dbReference type="eggNOG" id="KOG0676">
    <property type="taxonomic scope" value="Eukaryota"/>
</dbReference>
<dbReference type="GeneTree" id="ENSGT00940000155782"/>
<dbReference type="HOGENOM" id="CLU_027965_0_1_1"/>
<dbReference type="InParanoid" id="P61163"/>
<dbReference type="OMA" id="CIHSRFM"/>
<dbReference type="OrthoDB" id="5132116at2759"/>
<dbReference type="PAN-GO" id="P61163">
    <property type="GO annotations" value="0 GO annotations based on evolutionary models"/>
</dbReference>
<dbReference type="PhylomeDB" id="P61163"/>
<dbReference type="TreeFam" id="TF300420"/>
<dbReference type="PathwayCommons" id="P61163"/>
<dbReference type="Reactome" id="R-HSA-2132295">
    <property type="pathway name" value="MHC class II antigen presentation"/>
</dbReference>
<dbReference type="Reactome" id="R-HSA-2565942">
    <property type="pathway name" value="Regulation of PLK1 Activity at G2/M Transition"/>
</dbReference>
<dbReference type="Reactome" id="R-HSA-3371497">
    <property type="pathway name" value="HSP90 chaperone cycle for steroid hormone receptors (SHR) in the presence of ligand"/>
</dbReference>
<dbReference type="Reactome" id="R-HSA-380259">
    <property type="pathway name" value="Loss of Nlp from mitotic centrosomes"/>
</dbReference>
<dbReference type="Reactome" id="R-HSA-380270">
    <property type="pathway name" value="Recruitment of mitotic centrosome proteins and complexes"/>
</dbReference>
<dbReference type="Reactome" id="R-HSA-380284">
    <property type="pathway name" value="Loss of proteins required for interphase microtubule organization from the centrosome"/>
</dbReference>
<dbReference type="Reactome" id="R-HSA-380320">
    <property type="pathway name" value="Recruitment of NuMA to mitotic centrosomes"/>
</dbReference>
<dbReference type="Reactome" id="R-HSA-5620912">
    <property type="pathway name" value="Anchoring of the basal body to the plasma membrane"/>
</dbReference>
<dbReference type="Reactome" id="R-HSA-6807878">
    <property type="pathway name" value="COPI-mediated anterograde transport"/>
</dbReference>
<dbReference type="Reactome" id="R-HSA-6811436">
    <property type="pathway name" value="COPI-independent Golgi-to-ER retrograde traffic"/>
</dbReference>
<dbReference type="Reactome" id="R-HSA-8854518">
    <property type="pathway name" value="AURKA Activation by TPX2"/>
</dbReference>
<dbReference type="SignaLink" id="P61163"/>
<dbReference type="BioGRID-ORCS" id="10121">
    <property type="hits" value="557 hits in 1172 CRISPR screens"/>
</dbReference>
<dbReference type="CD-CODE" id="8C2F96ED">
    <property type="entry name" value="Centrosome"/>
</dbReference>
<dbReference type="CD-CODE" id="FB4E32DD">
    <property type="entry name" value="Presynaptic clusters and postsynaptic densities"/>
</dbReference>
<dbReference type="ChiTaRS" id="ACTR1A">
    <property type="organism name" value="human"/>
</dbReference>
<dbReference type="GeneWiki" id="ACTR1A"/>
<dbReference type="GenomeRNAi" id="10121"/>
<dbReference type="Pharos" id="P61163">
    <property type="development level" value="Tbio"/>
</dbReference>
<dbReference type="PRO" id="PR:P61163"/>
<dbReference type="Proteomes" id="UP000005640">
    <property type="component" value="Chromosome 10"/>
</dbReference>
<dbReference type="RNAct" id="P61163">
    <property type="molecule type" value="protein"/>
</dbReference>
<dbReference type="Bgee" id="ENSG00000138107">
    <property type="expression patterns" value="Expressed in cortical plate and 212 other cell types or tissues"/>
</dbReference>
<dbReference type="ExpressionAtlas" id="P61163">
    <property type="expression patterns" value="baseline and differential"/>
</dbReference>
<dbReference type="GO" id="GO:0005938">
    <property type="term" value="C:cell cortex"/>
    <property type="evidence" value="ECO:0000314"/>
    <property type="project" value="UniProtKB"/>
</dbReference>
<dbReference type="GO" id="GO:0005813">
    <property type="term" value="C:centrosome"/>
    <property type="evidence" value="ECO:0000314"/>
    <property type="project" value="UniProtKB"/>
</dbReference>
<dbReference type="GO" id="GO:0005737">
    <property type="term" value="C:cytoplasm"/>
    <property type="evidence" value="ECO:0000314"/>
    <property type="project" value="LIFEdb"/>
</dbReference>
<dbReference type="GO" id="GO:0005829">
    <property type="term" value="C:cytosol"/>
    <property type="evidence" value="ECO:0000304"/>
    <property type="project" value="Reactome"/>
</dbReference>
<dbReference type="GO" id="GO:0005869">
    <property type="term" value="C:dynactin complex"/>
    <property type="evidence" value="ECO:0000318"/>
    <property type="project" value="GO_Central"/>
</dbReference>
<dbReference type="GO" id="GO:0070062">
    <property type="term" value="C:extracellular exosome"/>
    <property type="evidence" value="ECO:0007005"/>
    <property type="project" value="UniProtKB"/>
</dbReference>
<dbReference type="GO" id="GO:0005875">
    <property type="term" value="C:microtubule associated complex"/>
    <property type="evidence" value="ECO:0000304"/>
    <property type="project" value="ProtInc"/>
</dbReference>
<dbReference type="GO" id="GO:0005524">
    <property type="term" value="F:ATP binding"/>
    <property type="evidence" value="ECO:0007669"/>
    <property type="project" value="UniProtKB-KW"/>
</dbReference>
<dbReference type="GO" id="GO:0016192">
    <property type="term" value="P:vesicle-mediated transport"/>
    <property type="evidence" value="ECO:0000304"/>
    <property type="project" value="ProtInc"/>
</dbReference>
<dbReference type="CDD" id="cd10216">
    <property type="entry name" value="ASKHA_NBD_Arp1"/>
    <property type="match status" value="1"/>
</dbReference>
<dbReference type="FunFam" id="3.30.420.40:FF:000188">
    <property type="entry name" value="Actin like 6B"/>
    <property type="match status" value="2"/>
</dbReference>
<dbReference type="FunFam" id="3.90.640.10:FF:000008">
    <property type="entry name" value="alpha-centractin isoform X1"/>
    <property type="match status" value="1"/>
</dbReference>
<dbReference type="Gene3D" id="3.30.420.40">
    <property type="match status" value="2"/>
</dbReference>
<dbReference type="Gene3D" id="3.90.640.10">
    <property type="entry name" value="Actin, Chain A, domain 4"/>
    <property type="match status" value="1"/>
</dbReference>
<dbReference type="InterPro" id="IPR004000">
    <property type="entry name" value="Actin"/>
</dbReference>
<dbReference type="InterPro" id="IPR020902">
    <property type="entry name" value="Actin/actin-like_CS"/>
</dbReference>
<dbReference type="InterPro" id="IPR004001">
    <property type="entry name" value="Actin_CS"/>
</dbReference>
<dbReference type="InterPro" id="IPR043129">
    <property type="entry name" value="ATPase_NBD"/>
</dbReference>
<dbReference type="PANTHER" id="PTHR11937">
    <property type="entry name" value="ACTIN"/>
    <property type="match status" value="1"/>
</dbReference>
<dbReference type="Pfam" id="PF00022">
    <property type="entry name" value="Actin"/>
    <property type="match status" value="1"/>
</dbReference>
<dbReference type="PRINTS" id="PR00190">
    <property type="entry name" value="ACTIN"/>
</dbReference>
<dbReference type="SMART" id="SM00268">
    <property type="entry name" value="ACTIN"/>
    <property type="match status" value="1"/>
</dbReference>
<dbReference type="SUPFAM" id="SSF53067">
    <property type="entry name" value="Actin-like ATPase domain"/>
    <property type="match status" value="2"/>
</dbReference>
<dbReference type="PROSITE" id="PS00432">
    <property type="entry name" value="ACTINS_2"/>
    <property type="match status" value="1"/>
</dbReference>
<dbReference type="PROSITE" id="PS01132">
    <property type="entry name" value="ACTINS_ACT_LIKE"/>
    <property type="match status" value="1"/>
</dbReference>
<evidence type="ECO:0000250" key="1">
    <source>
        <dbReference type="UniProtKB" id="F2Z5G5"/>
    </source>
</evidence>
<evidence type="ECO:0000250" key="2">
    <source>
        <dbReference type="UniProtKB" id="P85515"/>
    </source>
</evidence>
<evidence type="ECO:0000269" key="3">
    <source>
    </source>
</evidence>
<evidence type="ECO:0000269" key="4">
    <source>
    </source>
</evidence>
<evidence type="ECO:0000269" key="5">
    <source>
    </source>
</evidence>
<evidence type="ECO:0000305" key="6"/>
<evidence type="ECO:0000312" key="7">
    <source>
        <dbReference type="HGNC" id="HGNC:167"/>
    </source>
</evidence>
<evidence type="ECO:0007744" key="8">
    <source>
    </source>
</evidence>
<evidence type="ECO:0007744" key="9">
    <source>
    </source>
</evidence>
<reference key="1">
    <citation type="journal article" date="1994" name="Mol. Biol. Cell">
        <title>Beta-centractin: characterization and distribution of a new member of the centractin family of actin-related proteins.</title>
        <authorList>
            <person name="Clark S.W."/>
            <person name="Staub O."/>
            <person name="Holzbaur E.L.F."/>
            <person name="Paschal B.M."/>
            <person name="Vallee R.B."/>
            <person name="Meyer D.I."/>
            <person name="Clark I.B."/>
        </authorList>
    </citation>
    <scope>NUCLEOTIDE SEQUENCE [MRNA]</scope>
</reference>
<reference key="2">
    <citation type="journal article" date="1992" name="Nature">
        <title>A vertebrate actin-related protein is a component of a multisubunit complex involved in microtubule-based vesicle motility.</title>
        <authorList>
            <person name="Lees-Miller J.P."/>
            <person name="Helfman D.M."/>
            <person name="Schroer T.A."/>
        </authorList>
    </citation>
    <scope>NUCLEOTIDE SEQUENCE [MRNA]</scope>
    <source>
        <tissue>Testis</tissue>
    </source>
</reference>
<reference key="3">
    <citation type="journal article" date="2004" name="Nat. Genet.">
        <title>Complete sequencing and characterization of 21,243 full-length human cDNAs.</title>
        <authorList>
            <person name="Ota T."/>
            <person name="Suzuki Y."/>
            <person name="Nishikawa T."/>
            <person name="Otsuki T."/>
            <person name="Sugiyama T."/>
            <person name="Irie R."/>
            <person name="Wakamatsu A."/>
            <person name="Hayashi K."/>
            <person name="Sato H."/>
            <person name="Nagai K."/>
            <person name="Kimura K."/>
            <person name="Makita H."/>
            <person name="Sekine M."/>
            <person name="Obayashi M."/>
            <person name="Nishi T."/>
            <person name="Shibahara T."/>
            <person name="Tanaka T."/>
            <person name="Ishii S."/>
            <person name="Yamamoto J."/>
            <person name="Saito K."/>
            <person name="Kawai Y."/>
            <person name="Isono Y."/>
            <person name="Nakamura Y."/>
            <person name="Nagahari K."/>
            <person name="Murakami K."/>
            <person name="Yasuda T."/>
            <person name="Iwayanagi T."/>
            <person name="Wagatsuma M."/>
            <person name="Shiratori A."/>
            <person name="Sudo H."/>
            <person name="Hosoiri T."/>
            <person name="Kaku Y."/>
            <person name="Kodaira H."/>
            <person name="Kondo H."/>
            <person name="Sugawara M."/>
            <person name="Takahashi M."/>
            <person name="Kanda K."/>
            <person name="Yokoi T."/>
            <person name="Furuya T."/>
            <person name="Kikkawa E."/>
            <person name="Omura Y."/>
            <person name="Abe K."/>
            <person name="Kamihara K."/>
            <person name="Katsuta N."/>
            <person name="Sato K."/>
            <person name="Tanikawa M."/>
            <person name="Yamazaki M."/>
            <person name="Ninomiya K."/>
            <person name="Ishibashi T."/>
            <person name="Yamashita H."/>
            <person name="Murakawa K."/>
            <person name="Fujimori K."/>
            <person name="Tanai H."/>
            <person name="Kimata M."/>
            <person name="Watanabe M."/>
            <person name="Hiraoka S."/>
            <person name="Chiba Y."/>
            <person name="Ishida S."/>
            <person name="Ono Y."/>
            <person name="Takiguchi S."/>
            <person name="Watanabe S."/>
            <person name="Yosida M."/>
            <person name="Hotuta T."/>
            <person name="Kusano J."/>
            <person name="Kanehori K."/>
            <person name="Takahashi-Fujii A."/>
            <person name="Hara H."/>
            <person name="Tanase T.-O."/>
            <person name="Nomura Y."/>
            <person name="Togiya S."/>
            <person name="Komai F."/>
            <person name="Hara R."/>
            <person name="Takeuchi K."/>
            <person name="Arita M."/>
            <person name="Imose N."/>
            <person name="Musashino K."/>
            <person name="Yuuki H."/>
            <person name="Oshima A."/>
            <person name="Sasaki N."/>
            <person name="Aotsuka S."/>
            <person name="Yoshikawa Y."/>
            <person name="Matsunawa H."/>
            <person name="Ichihara T."/>
            <person name="Shiohata N."/>
            <person name="Sano S."/>
            <person name="Moriya S."/>
            <person name="Momiyama H."/>
            <person name="Satoh N."/>
            <person name="Takami S."/>
            <person name="Terashima Y."/>
            <person name="Suzuki O."/>
            <person name="Nakagawa S."/>
            <person name="Senoh A."/>
            <person name="Mizoguchi H."/>
            <person name="Goto Y."/>
            <person name="Shimizu F."/>
            <person name="Wakebe H."/>
            <person name="Hishigaki H."/>
            <person name="Watanabe T."/>
            <person name="Sugiyama A."/>
            <person name="Takemoto M."/>
            <person name="Kawakami B."/>
            <person name="Yamazaki M."/>
            <person name="Watanabe K."/>
            <person name="Kumagai A."/>
            <person name="Itakura S."/>
            <person name="Fukuzumi Y."/>
            <person name="Fujimori Y."/>
            <person name="Komiyama M."/>
            <person name="Tashiro H."/>
            <person name="Tanigami A."/>
            <person name="Fujiwara T."/>
            <person name="Ono T."/>
            <person name="Yamada K."/>
            <person name="Fujii Y."/>
            <person name="Ozaki K."/>
            <person name="Hirao M."/>
            <person name="Ohmori Y."/>
            <person name="Kawabata A."/>
            <person name="Hikiji T."/>
            <person name="Kobatake N."/>
            <person name="Inagaki H."/>
            <person name="Ikema Y."/>
            <person name="Okamoto S."/>
            <person name="Okitani R."/>
            <person name="Kawakami T."/>
            <person name="Noguchi S."/>
            <person name="Itoh T."/>
            <person name="Shigeta K."/>
            <person name="Senba T."/>
            <person name="Matsumura K."/>
            <person name="Nakajima Y."/>
            <person name="Mizuno T."/>
            <person name="Morinaga M."/>
            <person name="Sasaki M."/>
            <person name="Togashi T."/>
            <person name="Oyama M."/>
            <person name="Hata H."/>
            <person name="Watanabe M."/>
            <person name="Komatsu T."/>
            <person name="Mizushima-Sugano J."/>
            <person name="Satoh T."/>
            <person name="Shirai Y."/>
            <person name="Takahashi Y."/>
            <person name="Nakagawa K."/>
            <person name="Okumura K."/>
            <person name="Nagase T."/>
            <person name="Nomura N."/>
            <person name="Kikuchi H."/>
            <person name="Masuho Y."/>
            <person name="Yamashita R."/>
            <person name="Nakai K."/>
            <person name="Yada T."/>
            <person name="Nakamura Y."/>
            <person name="Ohara O."/>
            <person name="Isogai T."/>
            <person name="Sugano S."/>
        </authorList>
    </citation>
    <scope>NUCLEOTIDE SEQUENCE [LARGE SCALE MRNA]</scope>
    <source>
        <tissue>Thalamus</tissue>
    </source>
</reference>
<reference key="4">
    <citation type="journal article" date="2004" name="Nature">
        <title>The DNA sequence and comparative analysis of human chromosome 10.</title>
        <authorList>
            <person name="Deloukas P."/>
            <person name="Earthrowl M.E."/>
            <person name="Grafham D.V."/>
            <person name="Rubenfield M."/>
            <person name="French L."/>
            <person name="Steward C.A."/>
            <person name="Sims S.K."/>
            <person name="Jones M.C."/>
            <person name="Searle S."/>
            <person name="Scott C."/>
            <person name="Howe K."/>
            <person name="Hunt S.E."/>
            <person name="Andrews T.D."/>
            <person name="Gilbert J.G.R."/>
            <person name="Swarbreck D."/>
            <person name="Ashurst J.L."/>
            <person name="Taylor A."/>
            <person name="Battles J."/>
            <person name="Bird C.P."/>
            <person name="Ainscough R."/>
            <person name="Almeida J.P."/>
            <person name="Ashwell R.I.S."/>
            <person name="Ambrose K.D."/>
            <person name="Babbage A.K."/>
            <person name="Bagguley C.L."/>
            <person name="Bailey J."/>
            <person name="Banerjee R."/>
            <person name="Bates K."/>
            <person name="Beasley H."/>
            <person name="Bray-Allen S."/>
            <person name="Brown A.J."/>
            <person name="Brown J.Y."/>
            <person name="Burford D.C."/>
            <person name="Burrill W."/>
            <person name="Burton J."/>
            <person name="Cahill P."/>
            <person name="Camire D."/>
            <person name="Carter N.P."/>
            <person name="Chapman J.C."/>
            <person name="Clark S.Y."/>
            <person name="Clarke G."/>
            <person name="Clee C.M."/>
            <person name="Clegg S."/>
            <person name="Corby N."/>
            <person name="Coulson A."/>
            <person name="Dhami P."/>
            <person name="Dutta I."/>
            <person name="Dunn M."/>
            <person name="Faulkner L."/>
            <person name="Frankish A."/>
            <person name="Frankland J.A."/>
            <person name="Garner P."/>
            <person name="Garnett J."/>
            <person name="Gribble S."/>
            <person name="Griffiths C."/>
            <person name="Grocock R."/>
            <person name="Gustafson E."/>
            <person name="Hammond S."/>
            <person name="Harley J.L."/>
            <person name="Hart E."/>
            <person name="Heath P.D."/>
            <person name="Ho T.P."/>
            <person name="Hopkins B."/>
            <person name="Horne J."/>
            <person name="Howden P.J."/>
            <person name="Huckle E."/>
            <person name="Hynds C."/>
            <person name="Johnson C."/>
            <person name="Johnson D."/>
            <person name="Kana A."/>
            <person name="Kay M."/>
            <person name="Kimberley A.M."/>
            <person name="Kershaw J.K."/>
            <person name="Kokkinaki M."/>
            <person name="Laird G.K."/>
            <person name="Lawlor S."/>
            <person name="Lee H.M."/>
            <person name="Leongamornlert D.A."/>
            <person name="Laird G."/>
            <person name="Lloyd C."/>
            <person name="Lloyd D.M."/>
            <person name="Loveland J."/>
            <person name="Lovell J."/>
            <person name="McLaren S."/>
            <person name="McLay K.E."/>
            <person name="McMurray A."/>
            <person name="Mashreghi-Mohammadi M."/>
            <person name="Matthews L."/>
            <person name="Milne S."/>
            <person name="Nickerson T."/>
            <person name="Nguyen M."/>
            <person name="Overton-Larty E."/>
            <person name="Palmer S.A."/>
            <person name="Pearce A.V."/>
            <person name="Peck A.I."/>
            <person name="Pelan S."/>
            <person name="Phillimore B."/>
            <person name="Porter K."/>
            <person name="Rice C.M."/>
            <person name="Rogosin A."/>
            <person name="Ross M.T."/>
            <person name="Sarafidou T."/>
            <person name="Sehra H.K."/>
            <person name="Shownkeen R."/>
            <person name="Skuce C.D."/>
            <person name="Smith M."/>
            <person name="Standring L."/>
            <person name="Sycamore N."/>
            <person name="Tester J."/>
            <person name="Thorpe A."/>
            <person name="Torcasso W."/>
            <person name="Tracey A."/>
            <person name="Tromans A."/>
            <person name="Tsolas J."/>
            <person name="Wall M."/>
            <person name="Walsh J."/>
            <person name="Wang H."/>
            <person name="Weinstock K."/>
            <person name="West A.P."/>
            <person name="Willey D.L."/>
            <person name="Whitehead S.L."/>
            <person name="Wilming L."/>
            <person name="Wray P.W."/>
            <person name="Young L."/>
            <person name="Chen Y."/>
            <person name="Lovering R.C."/>
            <person name="Moschonas N.K."/>
            <person name="Siebert R."/>
            <person name="Fechtel K."/>
            <person name="Bentley D."/>
            <person name="Durbin R.M."/>
            <person name="Hubbard T."/>
            <person name="Doucette-Stamm L."/>
            <person name="Beck S."/>
            <person name="Smith D.R."/>
            <person name="Rogers J."/>
        </authorList>
    </citation>
    <scope>NUCLEOTIDE SEQUENCE [LARGE SCALE GENOMIC DNA]</scope>
</reference>
<reference key="5">
    <citation type="submission" date="2005-09" db="EMBL/GenBank/DDBJ databases">
        <authorList>
            <person name="Mural R.J."/>
            <person name="Istrail S."/>
            <person name="Sutton G.G."/>
            <person name="Florea L."/>
            <person name="Halpern A.L."/>
            <person name="Mobarry C.M."/>
            <person name="Lippert R."/>
            <person name="Walenz B."/>
            <person name="Shatkay H."/>
            <person name="Dew I."/>
            <person name="Miller J.R."/>
            <person name="Flanigan M.J."/>
            <person name="Edwards N.J."/>
            <person name="Bolanos R."/>
            <person name="Fasulo D."/>
            <person name="Halldorsson B.V."/>
            <person name="Hannenhalli S."/>
            <person name="Turner R."/>
            <person name="Yooseph S."/>
            <person name="Lu F."/>
            <person name="Nusskern D.R."/>
            <person name="Shue B.C."/>
            <person name="Zheng X.H."/>
            <person name="Zhong F."/>
            <person name="Delcher A.L."/>
            <person name="Huson D.H."/>
            <person name="Kravitz S.A."/>
            <person name="Mouchard L."/>
            <person name="Reinert K."/>
            <person name="Remington K.A."/>
            <person name="Clark A.G."/>
            <person name="Waterman M.S."/>
            <person name="Eichler E.E."/>
            <person name="Adams M.D."/>
            <person name="Hunkapiller M.W."/>
            <person name="Myers E.W."/>
            <person name="Venter J.C."/>
        </authorList>
    </citation>
    <scope>NUCLEOTIDE SEQUENCE [LARGE SCALE GENOMIC DNA]</scope>
</reference>
<reference key="6">
    <citation type="journal article" date="2004" name="Genome Res.">
        <title>The status, quality, and expansion of the NIH full-length cDNA project: the Mammalian Gene Collection (MGC).</title>
        <authorList>
            <consortium name="The MGC Project Team"/>
        </authorList>
    </citation>
    <scope>NUCLEOTIDE SEQUENCE [LARGE SCALE MRNA]</scope>
    <source>
        <tissue>Kidney</tissue>
        <tissue>Muscle</tissue>
    </source>
</reference>
<reference key="7">
    <citation type="submission" date="2008-03" db="UniProtKB">
        <authorList>
            <person name="Bienvenut W.V."/>
            <person name="Glen H."/>
            <person name="Frame M.C."/>
        </authorList>
    </citation>
    <scope>PROTEIN SEQUENCE OF 1-22; 239-255 AND 330-336</scope>
    <scope>IDENTIFICATION BY MASS SPECTROMETRY</scope>
    <source>
        <tissue>Osteosarcoma</tissue>
    </source>
</reference>
<reference key="8">
    <citation type="submission" date="2007-03" db="UniProtKB">
        <authorList>
            <person name="Lubec G."/>
            <person name="Vishwanath V."/>
        </authorList>
    </citation>
    <scope>PROTEIN SEQUENCE OF 97-118; 201-215 AND 239-255</scope>
    <scope>IDENTIFICATION BY MASS SPECTROMETRY</scope>
    <source>
        <tissue>Brain</tissue>
        <tissue>Cajal-Retzius cell</tissue>
    </source>
</reference>
<reference key="9">
    <citation type="journal article" date="2003" name="Nature">
        <title>Proteomic characterization of the human centrosome by protein correlation profiling.</title>
        <authorList>
            <person name="Andersen J.S."/>
            <person name="Wilkinson C.J."/>
            <person name="Mayor T."/>
            <person name="Mortensen P."/>
            <person name="Nigg E.A."/>
            <person name="Mann M."/>
        </authorList>
    </citation>
    <scope>IDENTIFICATION BY MASS SPECTROMETRY</scope>
    <scope>SUBCELLULAR LOCATION [LARGE SCALE ANALYSIS]</scope>
    <source>
        <tissue>Lymphoblast</tissue>
    </source>
</reference>
<reference key="10">
    <citation type="journal article" date="2009" name="Anal. Chem.">
        <title>Lys-N and trypsin cover complementary parts of the phosphoproteome in a refined SCX-based approach.</title>
        <authorList>
            <person name="Gauci S."/>
            <person name="Helbig A.O."/>
            <person name="Slijper M."/>
            <person name="Krijgsveld J."/>
            <person name="Heck A.J."/>
            <person name="Mohammed S."/>
        </authorList>
    </citation>
    <scope>ACETYLATION [LARGE SCALE ANALYSIS] AT MET-1</scope>
    <scope>IDENTIFICATION BY MASS SPECTROMETRY [LARGE SCALE ANALYSIS]</scope>
</reference>
<reference key="11">
    <citation type="journal article" date="2011" name="BMC Syst. Biol.">
        <title>Initial characterization of the human central proteome.</title>
        <authorList>
            <person name="Burkard T.R."/>
            <person name="Planyavsky M."/>
            <person name="Kaupe I."/>
            <person name="Breitwieser F.P."/>
            <person name="Buerckstuemmer T."/>
            <person name="Bennett K.L."/>
            <person name="Superti-Furga G."/>
            <person name="Colinge J."/>
        </authorList>
    </citation>
    <scope>IDENTIFICATION BY MASS SPECTROMETRY [LARGE SCALE ANALYSIS]</scope>
</reference>
<reference key="12">
    <citation type="journal article" date="2012" name="Mol. Cell. Proteomics">
        <title>Comparative large-scale characterisation of plant vs. mammal proteins reveals similar and idiosyncratic N-alpha acetylation features.</title>
        <authorList>
            <person name="Bienvenut W.V."/>
            <person name="Sumpton D."/>
            <person name="Martinez A."/>
            <person name="Lilla S."/>
            <person name="Espagne C."/>
            <person name="Meinnel T."/>
            <person name="Giglione C."/>
        </authorList>
    </citation>
    <scope>ACETYLATION [LARGE SCALE ANALYSIS] AT MET-1</scope>
    <scope>IDENTIFICATION BY MASS SPECTROMETRY [LARGE SCALE ANALYSIS]</scope>
</reference>
<reference key="13">
    <citation type="journal article" date="2012" name="Nat. Cell Biol.">
        <title>Chromosome- and spindle-pole-derived signals generate an intrinsic code for spindle position and orientation.</title>
        <authorList>
            <person name="Kiyomitsu T."/>
            <person name="Cheeseman I.M."/>
        </authorList>
    </citation>
    <scope>SUBCELLULAR LOCATION</scope>
</reference>
<reference key="14">
    <citation type="journal article" date="2014" name="J. Proteomics">
        <title>An enzyme assisted RP-RPLC approach for in-depth analysis of human liver phosphoproteome.</title>
        <authorList>
            <person name="Bian Y."/>
            <person name="Song C."/>
            <person name="Cheng K."/>
            <person name="Dong M."/>
            <person name="Wang F."/>
            <person name="Huang J."/>
            <person name="Sun D."/>
            <person name="Wang L."/>
            <person name="Ye M."/>
            <person name="Zou H."/>
        </authorList>
    </citation>
    <scope>IDENTIFICATION BY MASS SPECTROMETRY [LARGE SCALE ANALYSIS]</scope>
    <source>
        <tissue>Liver</tissue>
    </source>
</reference>
<reference key="15">
    <citation type="journal article" date="2015" name="Proteomics">
        <title>N-terminome analysis of the human mitochondrial proteome.</title>
        <authorList>
            <person name="Vaca Jacome A.S."/>
            <person name="Rabilloud T."/>
            <person name="Schaeffer-Reiss C."/>
            <person name="Rompais M."/>
            <person name="Ayoub D."/>
            <person name="Lane L."/>
            <person name="Bairoch A."/>
            <person name="Van Dorsselaer A."/>
            <person name="Carapito C."/>
        </authorList>
    </citation>
    <scope>IDENTIFICATION BY MASS SPECTROMETRY [LARGE SCALE ANALYSIS]</scope>
</reference>
<reference key="16">
    <citation type="journal article" date="2017" name="Oncogene">
        <title>Regulation of spindle integrity and mitotic fidelity by BCCIP.</title>
        <authorList>
            <person name="Huhn S.C."/>
            <person name="Liu J."/>
            <person name="Ye C."/>
            <person name="Lu H."/>
            <person name="Jiang X."/>
            <person name="Feng X."/>
            <person name="Ganesan S."/>
            <person name="White E."/>
            <person name="Shen Z."/>
        </authorList>
    </citation>
    <scope>INTERACTION WITH BCCIP</scope>
</reference>
<proteinExistence type="evidence at protein level"/>
<protein>
    <recommendedName>
        <fullName>Alpha-centractin</fullName>
        <shortName>Centractin</shortName>
    </recommendedName>
    <alternativeName>
        <fullName>ARP1</fullName>
    </alternativeName>
    <alternativeName>
        <fullName>Actin-RPV</fullName>
    </alternativeName>
    <alternativeName>
        <fullName>Centrosome-associated actin homolog</fullName>
    </alternativeName>
</protein>
<organism>
    <name type="scientific">Homo sapiens</name>
    <name type="common">Human</name>
    <dbReference type="NCBI Taxonomy" id="9606"/>
    <lineage>
        <taxon>Eukaryota</taxon>
        <taxon>Metazoa</taxon>
        <taxon>Chordata</taxon>
        <taxon>Craniata</taxon>
        <taxon>Vertebrata</taxon>
        <taxon>Euteleostomi</taxon>
        <taxon>Mammalia</taxon>
        <taxon>Eutheria</taxon>
        <taxon>Euarchontoglires</taxon>
        <taxon>Primates</taxon>
        <taxon>Haplorrhini</taxon>
        <taxon>Catarrhini</taxon>
        <taxon>Hominidae</taxon>
        <taxon>Homo</taxon>
    </lineage>
</organism>